<gene>
    <name evidence="1" type="primary">tusD</name>
    <name type="ordered locus">EC55989_3748</name>
</gene>
<protein>
    <recommendedName>
        <fullName evidence="1">Sulfurtransferase TusD</fullName>
        <ecNumber evidence="1">2.8.1.-</ecNumber>
    </recommendedName>
    <alternativeName>
        <fullName evidence="1">tRNA 2-thiouridine synthesizing protein D</fullName>
    </alternativeName>
</protein>
<organism>
    <name type="scientific">Escherichia coli (strain 55989 / EAEC)</name>
    <dbReference type="NCBI Taxonomy" id="585055"/>
    <lineage>
        <taxon>Bacteria</taxon>
        <taxon>Pseudomonadati</taxon>
        <taxon>Pseudomonadota</taxon>
        <taxon>Gammaproteobacteria</taxon>
        <taxon>Enterobacterales</taxon>
        <taxon>Enterobacteriaceae</taxon>
        <taxon>Escherichia</taxon>
    </lineage>
</organism>
<keyword id="KW-0963">Cytoplasm</keyword>
<keyword id="KW-1185">Reference proteome</keyword>
<keyword id="KW-0808">Transferase</keyword>
<keyword id="KW-0819">tRNA processing</keyword>
<sequence length="128" mass="13624">MRFAIVVTGPAYGTQQASSAFQFAQALIAEGHELSSVFFYREGVYNANQLTSPASDEFDLVRGWQQLNAQHGVALNICVAAALRRGIVDETEAGRLGLASSNLQPGFTLSGLGALAEASLTCDRVVQF</sequence>
<feature type="chain" id="PRO_1000134415" description="Sulfurtransferase TusD">
    <location>
        <begin position="1"/>
        <end position="128"/>
    </location>
</feature>
<feature type="active site" description="Cysteine persulfide intermediate" evidence="1">
    <location>
        <position position="78"/>
    </location>
</feature>
<proteinExistence type="inferred from homology"/>
<dbReference type="EC" id="2.8.1.-" evidence="1"/>
<dbReference type="EMBL" id="CU928145">
    <property type="protein sequence ID" value="CAV00059.1"/>
    <property type="molecule type" value="Genomic_DNA"/>
</dbReference>
<dbReference type="RefSeq" id="WP_001209689.1">
    <property type="nucleotide sequence ID" value="NC_011748.1"/>
</dbReference>
<dbReference type="SMR" id="B7L4M1"/>
<dbReference type="KEGG" id="eck:EC55989_3748"/>
<dbReference type="HOGENOM" id="CLU_132095_0_0_6"/>
<dbReference type="Proteomes" id="UP000000746">
    <property type="component" value="Chromosome"/>
</dbReference>
<dbReference type="GO" id="GO:1990228">
    <property type="term" value="C:sulfurtransferase complex"/>
    <property type="evidence" value="ECO:0007669"/>
    <property type="project" value="TreeGrafter"/>
</dbReference>
<dbReference type="GO" id="GO:0097163">
    <property type="term" value="F:sulfur carrier activity"/>
    <property type="evidence" value="ECO:0007669"/>
    <property type="project" value="TreeGrafter"/>
</dbReference>
<dbReference type="GO" id="GO:0016783">
    <property type="term" value="F:sulfurtransferase activity"/>
    <property type="evidence" value="ECO:0007669"/>
    <property type="project" value="UniProtKB-UniRule"/>
</dbReference>
<dbReference type="GO" id="GO:0002143">
    <property type="term" value="P:tRNA wobble position uridine thiolation"/>
    <property type="evidence" value="ECO:0007669"/>
    <property type="project" value="TreeGrafter"/>
</dbReference>
<dbReference type="FunFam" id="3.40.1260.10:FF:000001">
    <property type="entry name" value="Sulfurtransferase TusD"/>
    <property type="match status" value="1"/>
</dbReference>
<dbReference type="Gene3D" id="3.40.1260.10">
    <property type="entry name" value="DsrEFH-like"/>
    <property type="match status" value="1"/>
</dbReference>
<dbReference type="HAMAP" id="MF_00390">
    <property type="entry name" value="Thiourid_synth_D"/>
    <property type="match status" value="1"/>
</dbReference>
<dbReference type="InterPro" id="IPR027396">
    <property type="entry name" value="DsrEFH-like"/>
</dbReference>
<dbReference type="InterPro" id="IPR003787">
    <property type="entry name" value="Sulphur_relay_DsrE/F-like"/>
</dbReference>
<dbReference type="InterPro" id="IPR017463">
    <property type="entry name" value="Sulphur_relay_TusD/DsrE"/>
</dbReference>
<dbReference type="NCBIfam" id="NF001237">
    <property type="entry name" value="PRK00207.1"/>
    <property type="match status" value="1"/>
</dbReference>
<dbReference type="NCBIfam" id="TIGR03012">
    <property type="entry name" value="sulf_tusD_dsrE"/>
    <property type="match status" value="1"/>
</dbReference>
<dbReference type="PANTHER" id="PTHR34874">
    <property type="entry name" value="PROTEIN YCHN"/>
    <property type="match status" value="1"/>
</dbReference>
<dbReference type="PANTHER" id="PTHR34874:SF3">
    <property type="entry name" value="SULFURTRANSFERASE TUSD"/>
    <property type="match status" value="1"/>
</dbReference>
<dbReference type="Pfam" id="PF02635">
    <property type="entry name" value="DsrE"/>
    <property type="match status" value="1"/>
</dbReference>
<dbReference type="SUPFAM" id="SSF75169">
    <property type="entry name" value="DsrEFH-like"/>
    <property type="match status" value="1"/>
</dbReference>
<reference key="1">
    <citation type="journal article" date="2009" name="PLoS Genet.">
        <title>Organised genome dynamics in the Escherichia coli species results in highly diverse adaptive paths.</title>
        <authorList>
            <person name="Touchon M."/>
            <person name="Hoede C."/>
            <person name="Tenaillon O."/>
            <person name="Barbe V."/>
            <person name="Baeriswyl S."/>
            <person name="Bidet P."/>
            <person name="Bingen E."/>
            <person name="Bonacorsi S."/>
            <person name="Bouchier C."/>
            <person name="Bouvet O."/>
            <person name="Calteau A."/>
            <person name="Chiapello H."/>
            <person name="Clermont O."/>
            <person name="Cruveiller S."/>
            <person name="Danchin A."/>
            <person name="Diard M."/>
            <person name="Dossat C."/>
            <person name="Karoui M.E."/>
            <person name="Frapy E."/>
            <person name="Garry L."/>
            <person name="Ghigo J.M."/>
            <person name="Gilles A.M."/>
            <person name="Johnson J."/>
            <person name="Le Bouguenec C."/>
            <person name="Lescat M."/>
            <person name="Mangenot S."/>
            <person name="Martinez-Jehanne V."/>
            <person name="Matic I."/>
            <person name="Nassif X."/>
            <person name="Oztas S."/>
            <person name="Petit M.A."/>
            <person name="Pichon C."/>
            <person name="Rouy Z."/>
            <person name="Ruf C.S."/>
            <person name="Schneider D."/>
            <person name="Tourret J."/>
            <person name="Vacherie B."/>
            <person name="Vallenet D."/>
            <person name="Medigue C."/>
            <person name="Rocha E.P.C."/>
            <person name="Denamur E."/>
        </authorList>
    </citation>
    <scope>NUCLEOTIDE SEQUENCE [LARGE SCALE GENOMIC DNA]</scope>
    <source>
        <strain>55989 / EAEC</strain>
    </source>
</reference>
<comment type="function">
    <text evidence="1">Part of a sulfur-relay system required for 2-thiolation of 5-methylaminomethyl-2-thiouridine (mnm(5)s(2)U) at tRNA wobble positions. Accepts sulfur from TusA and transfers it in turn to TusE.</text>
</comment>
<comment type="subunit">
    <text evidence="1">Heterohexamer, formed by a dimer of trimers. The hexameric TusBCD complex contains 2 copies each of TusB, TusC and TusD. The TusBCD complex interacts with TusE.</text>
</comment>
<comment type="subcellular location">
    <subcellularLocation>
        <location evidence="1">Cytoplasm</location>
    </subcellularLocation>
</comment>
<comment type="similarity">
    <text evidence="1">Belongs to the DsrE/TusD family.</text>
</comment>
<evidence type="ECO:0000255" key="1">
    <source>
        <dbReference type="HAMAP-Rule" id="MF_00390"/>
    </source>
</evidence>
<accession>B7L4M1</accession>
<name>TUSD_ECO55</name>